<evidence type="ECO:0000255" key="1">
    <source>
        <dbReference type="HAMAP-Rule" id="MF_00274"/>
    </source>
</evidence>
<accession>Q81W17</accession>
<accession>Q6I520</accession>
<accession>Q6KYR4</accession>
<sequence>MMRGGMGNMNNMMKQMQKMQKEMAKAQEELGEKTVEGTAGGGMITVIANGHKQILEVKVKEEVVDPEDIEMLQDLVLAATNDALKKADELSNSTMGKFTKGLNLPGGMF</sequence>
<name>Y020_BACAN</name>
<reference key="1">
    <citation type="journal article" date="2003" name="Nature">
        <title>The genome sequence of Bacillus anthracis Ames and comparison to closely related bacteria.</title>
        <authorList>
            <person name="Read T.D."/>
            <person name="Peterson S.N."/>
            <person name="Tourasse N.J."/>
            <person name="Baillie L.W."/>
            <person name="Paulsen I.T."/>
            <person name="Nelson K.E."/>
            <person name="Tettelin H."/>
            <person name="Fouts D.E."/>
            <person name="Eisen J.A."/>
            <person name="Gill S.R."/>
            <person name="Holtzapple E.K."/>
            <person name="Okstad O.A."/>
            <person name="Helgason E."/>
            <person name="Rilstone J."/>
            <person name="Wu M."/>
            <person name="Kolonay J.F."/>
            <person name="Beanan M.J."/>
            <person name="Dodson R.J."/>
            <person name="Brinkac L.M."/>
            <person name="Gwinn M.L."/>
            <person name="DeBoy R.T."/>
            <person name="Madpu R."/>
            <person name="Daugherty S.C."/>
            <person name="Durkin A.S."/>
            <person name="Haft D.H."/>
            <person name="Nelson W.C."/>
            <person name="Peterson J.D."/>
            <person name="Pop M."/>
            <person name="Khouri H.M."/>
            <person name="Radune D."/>
            <person name="Benton J.L."/>
            <person name="Mahamoud Y."/>
            <person name="Jiang L."/>
            <person name="Hance I.R."/>
            <person name="Weidman J.F."/>
            <person name="Berry K.J."/>
            <person name="Plaut R.D."/>
            <person name="Wolf A.M."/>
            <person name="Watkins K.L."/>
            <person name="Nierman W.C."/>
            <person name="Hazen A."/>
            <person name="Cline R.T."/>
            <person name="Redmond C."/>
            <person name="Thwaite J.E."/>
            <person name="White O."/>
            <person name="Salzberg S.L."/>
            <person name="Thomason B."/>
            <person name="Friedlander A.M."/>
            <person name="Koehler T.M."/>
            <person name="Hanna P.C."/>
            <person name="Kolstoe A.-B."/>
            <person name="Fraser C.M."/>
        </authorList>
    </citation>
    <scope>NUCLEOTIDE SEQUENCE [LARGE SCALE GENOMIC DNA]</scope>
    <source>
        <strain>Ames / isolate Porton</strain>
    </source>
</reference>
<reference key="2">
    <citation type="journal article" date="2009" name="J. Bacteriol.">
        <title>The complete genome sequence of Bacillus anthracis Ames 'Ancestor'.</title>
        <authorList>
            <person name="Ravel J."/>
            <person name="Jiang L."/>
            <person name="Stanley S.T."/>
            <person name="Wilson M.R."/>
            <person name="Decker R.S."/>
            <person name="Read T.D."/>
            <person name="Worsham P."/>
            <person name="Keim P.S."/>
            <person name="Salzberg S.L."/>
            <person name="Fraser-Liggett C.M."/>
            <person name="Rasko D.A."/>
        </authorList>
    </citation>
    <scope>NUCLEOTIDE SEQUENCE [LARGE SCALE GENOMIC DNA]</scope>
    <source>
        <strain>Ames ancestor</strain>
    </source>
</reference>
<reference key="3">
    <citation type="submission" date="2004-01" db="EMBL/GenBank/DDBJ databases">
        <title>Complete genome sequence of Bacillus anthracis Sterne.</title>
        <authorList>
            <person name="Brettin T.S."/>
            <person name="Bruce D."/>
            <person name="Challacombe J.F."/>
            <person name="Gilna P."/>
            <person name="Han C."/>
            <person name="Hill K."/>
            <person name="Hitchcock P."/>
            <person name="Jackson P."/>
            <person name="Keim P."/>
            <person name="Longmire J."/>
            <person name="Lucas S."/>
            <person name="Okinaka R."/>
            <person name="Richardson P."/>
            <person name="Rubin E."/>
            <person name="Tice H."/>
        </authorList>
    </citation>
    <scope>NUCLEOTIDE SEQUENCE [LARGE SCALE GENOMIC DNA]</scope>
    <source>
        <strain>Sterne</strain>
    </source>
</reference>
<protein>
    <recommendedName>
        <fullName evidence="1">Nucleoid-associated protein BA_0020/GBAA_0020/BAS0022</fullName>
    </recommendedName>
</protein>
<feature type="chain" id="PRO_0000170362" description="Nucleoid-associated protein BA_0020/GBAA_0020/BAS0022">
    <location>
        <begin position="1"/>
        <end position="109"/>
    </location>
</feature>
<dbReference type="EMBL" id="AE016879">
    <property type="protein sequence ID" value="AAP24077.1"/>
    <property type="molecule type" value="Genomic_DNA"/>
</dbReference>
<dbReference type="EMBL" id="AE017334">
    <property type="protein sequence ID" value="AAT29099.1"/>
    <property type="molecule type" value="Genomic_DNA"/>
</dbReference>
<dbReference type="EMBL" id="AE017225">
    <property type="protein sequence ID" value="AAT52361.1"/>
    <property type="molecule type" value="Genomic_DNA"/>
</dbReference>
<dbReference type="RefSeq" id="NP_842591.1">
    <property type="nucleotide sequence ID" value="NC_003997.3"/>
</dbReference>
<dbReference type="RefSeq" id="YP_026310.1">
    <property type="nucleotide sequence ID" value="NC_005945.1"/>
</dbReference>
<dbReference type="SMR" id="Q81W17"/>
<dbReference type="STRING" id="261594.GBAA_0020"/>
<dbReference type="KEGG" id="ban:BA_0020"/>
<dbReference type="KEGG" id="bar:GBAA_0020"/>
<dbReference type="KEGG" id="bat:BAS0022"/>
<dbReference type="PATRIC" id="fig|198094.11.peg.20"/>
<dbReference type="eggNOG" id="COG0718">
    <property type="taxonomic scope" value="Bacteria"/>
</dbReference>
<dbReference type="HOGENOM" id="CLU_140930_1_0_9"/>
<dbReference type="OMA" id="MGNMMKQ"/>
<dbReference type="OrthoDB" id="9795263at2"/>
<dbReference type="Proteomes" id="UP000000427">
    <property type="component" value="Chromosome"/>
</dbReference>
<dbReference type="Proteomes" id="UP000000594">
    <property type="component" value="Chromosome"/>
</dbReference>
<dbReference type="GO" id="GO:0043590">
    <property type="term" value="C:bacterial nucleoid"/>
    <property type="evidence" value="ECO:0007669"/>
    <property type="project" value="UniProtKB-UniRule"/>
</dbReference>
<dbReference type="GO" id="GO:0005829">
    <property type="term" value="C:cytosol"/>
    <property type="evidence" value="ECO:0007669"/>
    <property type="project" value="TreeGrafter"/>
</dbReference>
<dbReference type="GO" id="GO:0003677">
    <property type="term" value="F:DNA binding"/>
    <property type="evidence" value="ECO:0007669"/>
    <property type="project" value="UniProtKB-UniRule"/>
</dbReference>
<dbReference type="FunFam" id="3.30.1310.10:FF:000002">
    <property type="entry name" value="Nucleoid-associated protein IKC_06587"/>
    <property type="match status" value="1"/>
</dbReference>
<dbReference type="Gene3D" id="3.30.1310.10">
    <property type="entry name" value="Nucleoid-associated protein YbaB-like domain"/>
    <property type="match status" value="1"/>
</dbReference>
<dbReference type="HAMAP" id="MF_00274">
    <property type="entry name" value="DNA_YbaB_EbfC"/>
    <property type="match status" value="1"/>
</dbReference>
<dbReference type="InterPro" id="IPR036894">
    <property type="entry name" value="YbaB-like_sf"/>
</dbReference>
<dbReference type="InterPro" id="IPR004401">
    <property type="entry name" value="YbaB/EbfC"/>
</dbReference>
<dbReference type="NCBIfam" id="TIGR00103">
    <property type="entry name" value="DNA_YbaB_EbfC"/>
    <property type="match status" value="1"/>
</dbReference>
<dbReference type="PANTHER" id="PTHR33449">
    <property type="entry name" value="NUCLEOID-ASSOCIATED PROTEIN YBAB"/>
    <property type="match status" value="1"/>
</dbReference>
<dbReference type="PANTHER" id="PTHR33449:SF1">
    <property type="entry name" value="NUCLEOID-ASSOCIATED PROTEIN YBAB"/>
    <property type="match status" value="1"/>
</dbReference>
<dbReference type="Pfam" id="PF02575">
    <property type="entry name" value="YbaB_DNA_bd"/>
    <property type="match status" value="1"/>
</dbReference>
<dbReference type="PIRSF" id="PIRSF004555">
    <property type="entry name" value="UCP004555"/>
    <property type="match status" value="1"/>
</dbReference>
<dbReference type="SUPFAM" id="SSF82607">
    <property type="entry name" value="YbaB-like"/>
    <property type="match status" value="1"/>
</dbReference>
<keyword id="KW-0963">Cytoplasm</keyword>
<keyword id="KW-0238">DNA-binding</keyword>
<keyword id="KW-1185">Reference proteome</keyword>
<proteinExistence type="inferred from homology"/>
<gene>
    <name type="ordered locus">BA_0020</name>
    <name type="ordered locus">GBAA_0020</name>
    <name type="ordered locus">BAS0022</name>
</gene>
<organism>
    <name type="scientific">Bacillus anthracis</name>
    <dbReference type="NCBI Taxonomy" id="1392"/>
    <lineage>
        <taxon>Bacteria</taxon>
        <taxon>Bacillati</taxon>
        <taxon>Bacillota</taxon>
        <taxon>Bacilli</taxon>
        <taxon>Bacillales</taxon>
        <taxon>Bacillaceae</taxon>
        <taxon>Bacillus</taxon>
        <taxon>Bacillus cereus group</taxon>
    </lineage>
</organism>
<comment type="function">
    <text evidence="1">Binds to DNA and alters its conformation. May be involved in regulation of gene expression, nucleoid organization and DNA protection.</text>
</comment>
<comment type="subunit">
    <text evidence="1">Homodimer.</text>
</comment>
<comment type="subcellular location">
    <subcellularLocation>
        <location evidence="1">Cytoplasm</location>
        <location evidence="1">Nucleoid</location>
    </subcellularLocation>
</comment>
<comment type="similarity">
    <text evidence="1">Belongs to the YbaB/EbfC family.</text>
</comment>